<gene>
    <name type="primary">matPi</name>
</gene>
<organism>
    <name type="scientific">Schizosaccharomyces kambucha</name>
    <name type="common">Fission yeast</name>
    <dbReference type="NCBI Taxonomy" id="204045"/>
    <lineage>
        <taxon>Eukaryota</taxon>
        <taxon>Fungi</taxon>
        <taxon>Dikarya</taxon>
        <taxon>Ascomycota</taxon>
        <taxon>Taphrinomycotina</taxon>
        <taxon>Schizosaccharomycetes</taxon>
        <taxon>Schizosaccharomycetales</taxon>
        <taxon>Schizosaccharomycetaceae</taxon>
        <taxon>Schizosaccharomyces</taxon>
    </lineage>
</organism>
<protein>
    <recommendedName>
        <fullName>Mating-type P-specific polypeptide Pi</fullName>
    </recommendedName>
</protein>
<sequence length="159" mass="18671">MKRVAVLLKTVMCEFLKCDYNGYDRIISLLRRILTLICTPNLNGLTIKRVIDSMQSLEYIKQTCNFKLQMCISSMAFKRNNALQNCNHYAWCDDHCSDIGRPMTTVRGQCSKCTKPHLMRWLLLHYDNPYPSNSEFYDLSAATGLTRTQLRNWFSNRRR</sequence>
<feature type="chain" id="PRO_0000049408" description="Mating-type P-specific polypeptide Pi">
    <location>
        <begin position="1"/>
        <end position="159"/>
    </location>
</feature>
<feature type="DNA-binding region" description="Homeobox; TALE-type; partial" evidence="2">
    <location>
        <begin position="103"/>
        <end position="159"/>
    </location>
</feature>
<keyword id="KW-0238">DNA-binding</keyword>
<keyword id="KW-0371">Homeobox</keyword>
<keyword id="KW-0539">Nucleus</keyword>
<comment type="function">
    <text evidence="1">Mating type proteins are sequence specific DNA-binding proteins that act as master switches in yeast differentiation by controlling gene expression in a cell type-specific fashion. Required for meiosis, but plays no role in conjugation (By similarity).</text>
</comment>
<comment type="subcellular location">
    <subcellularLocation>
        <location evidence="2">Nucleus</location>
    </subcellularLocation>
</comment>
<comment type="miscellaneous">
    <text evidence="1">There are three genetic loci for mating type genes in fission yeast, mat1, mat2-P and mat3-M. Cell type is determined by the alternate allele present in mat1, either P (plus) in a h+ or M (minus) in a h- cell. Mat2-P and mat3-M serve as donor of information that is transposed to mat1 during a switch of mating type (By similarity).</text>
</comment>
<comment type="similarity">
    <text evidence="3">Belongs to the TALE/M-ATYP homeobox family.</text>
</comment>
<dbReference type="EMBL" id="AY271822">
    <property type="protein sequence ID" value="AAQ82720.1"/>
    <property type="molecule type" value="Genomic_DNA"/>
</dbReference>
<dbReference type="SMR" id="Q6WRX8"/>
<dbReference type="GO" id="GO:0005634">
    <property type="term" value="C:nucleus"/>
    <property type="evidence" value="ECO:0007669"/>
    <property type="project" value="UniProtKB-SubCell"/>
</dbReference>
<dbReference type="GO" id="GO:0003677">
    <property type="term" value="F:DNA binding"/>
    <property type="evidence" value="ECO:0007669"/>
    <property type="project" value="UniProtKB-KW"/>
</dbReference>
<dbReference type="GO" id="GO:0006355">
    <property type="term" value="P:regulation of DNA-templated transcription"/>
    <property type="evidence" value="ECO:0007669"/>
    <property type="project" value="InterPro"/>
</dbReference>
<dbReference type="CDD" id="cd00086">
    <property type="entry name" value="homeodomain"/>
    <property type="match status" value="1"/>
</dbReference>
<dbReference type="Gene3D" id="1.10.10.60">
    <property type="entry name" value="Homeodomain-like"/>
    <property type="match status" value="1"/>
</dbReference>
<dbReference type="InterPro" id="IPR001356">
    <property type="entry name" value="HD"/>
</dbReference>
<dbReference type="InterPro" id="IPR009057">
    <property type="entry name" value="Homeodomain-like_sf"/>
</dbReference>
<dbReference type="InterPro" id="IPR008422">
    <property type="entry name" value="KN_HD"/>
</dbReference>
<dbReference type="InterPro" id="IPR050224">
    <property type="entry name" value="TALE_homeobox"/>
</dbReference>
<dbReference type="PANTHER" id="PTHR11850">
    <property type="entry name" value="HOMEOBOX PROTEIN TRANSCRIPTION FACTORS"/>
    <property type="match status" value="1"/>
</dbReference>
<dbReference type="Pfam" id="PF05920">
    <property type="entry name" value="Homeobox_KN"/>
    <property type="match status" value="1"/>
</dbReference>
<dbReference type="SUPFAM" id="SSF46689">
    <property type="entry name" value="Homeodomain-like"/>
    <property type="match status" value="1"/>
</dbReference>
<dbReference type="PROSITE" id="PS50071">
    <property type="entry name" value="HOMEOBOX_2"/>
    <property type="match status" value="1"/>
</dbReference>
<reference key="1">
    <citation type="journal article" date="2003" name="Yeast">
        <title>DNA sequence of the mat2,3 region of Schizosaccharomyces kambucha shares high homology with the corresponding sequence from Sz. pombe.</title>
        <authorList>
            <person name="Singh G."/>
            <person name="Klar A.J.S."/>
        </authorList>
    </citation>
    <scope>NUCLEOTIDE SEQUENCE [GENOMIC DNA]</scope>
</reference>
<accession>Q6WRX8</accession>
<evidence type="ECO:0000250" key="1"/>
<evidence type="ECO:0000255" key="2">
    <source>
        <dbReference type="PROSITE-ProRule" id="PRU00108"/>
    </source>
</evidence>
<evidence type="ECO:0000305" key="3"/>
<proteinExistence type="inferred from homology"/>
<name>MATPI_SCHKA</name>